<sequence length="654" mass="76048">MCQEGLFRLALSSPRKQTACSLGERRTLAEALGLVDSTLESRRDPNSSLQKEFPQHQDEDQSRAAAPQDCLLRDVECIAQKLEASLEEIHRGAREPREEREQRTLGDALENARLEIEKLKDNLMKLKESGTTDLQRAREHNQRLDEEILALRNRVRSLDSEKKVLGEMYLTSGEKTSCQHQGELRELRQNLRRLQILCNSAEKELRYERGRSLDLKQHNSLLQEENIKIKIELKQAQEKLLDNARLHSSLTAEWKHCQQKVKELELEGLRQTQSLKSQQGLQEKLAREKSKAAEAQEKILDLQQKLDHGRQVCLSDVCILRKKQLEEEIKEAKSIEARLQQQCQEEQQRRILLDQDINELQTQVRALQDKEEQQEAVNSQQQEALRKQLERERRKCEEYVKSNQELSEKLSNLQQEKEALWQEHGRFLEQLGDHVRNYKDKHHCHKAKLQKVKDRLTHELEIRNKRIKELEDETGKLQQKIEMEKVFQGQIMAQNDILLLEKRKLLEQVTDQEELICSSKCTISAFQSKASLLDKENQQLQENCLRLMQQIGLLEQIIRSIQIRREEETVITDNAAFEILKKILPLQNSSFSGTGFVLSAENLQETELHKWEGAAAIPKSPEPLSRSQDSESGYINVTSLKETHNTQGDQKPEL</sequence>
<organism>
    <name type="scientific">Mus musculus</name>
    <name type="common">Mouse</name>
    <dbReference type="NCBI Taxonomy" id="10090"/>
    <lineage>
        <taxon>Eukaryota</taxon>
        <taxon>Metazoa</taxon>
        <taxon>Chordata</taxon>
        <taxon>Craniata</taxon>
        <taxon>Vertebrata</taxon>
        <taxon>Euteleostomi</taxon>
        <taxon>Mammalia</taxon>
        <taxon>Eutheria</taxon>
        <taxon>Euarchontoglires</taxon>
        <taxon>Glires</taxon>
        <taxon>Rodentia</taxon>
        <taxon>Myomorpha</taxon>
        <taxon>Muroidea</taxon>
        <taxon>Muridae</taxon>
        <taxon>Murinae</taxon>
        <taxon>Mus</taxon>
        <taxon>Mus</taxon>
    </lineage>
</organism>
<reference key="1">
    <citation type="journal article" date="2005" name="Science">
        <title>The transcriptional landscape of the mammalian genome.</title>
        <authorList>
            <person name="Carninci P."/>
            <person name="Kasukawa T."/>
            <person name="Katayama S."/>
            <person name="Gough J."/>
            <person name="Frith M.C."/>
            <person name="Maeda N."/>
            <person name="Oyama R."/>
            <person name="Ravasi T."/>
            <person name="Lenhard B."/>
            <person name="Wells C."/>
            <person name="Kodzius R."/>
            <person name="Shimokawa K."/>
            <person name="Bajic V.B."/>
            <person name="Brenner S.E."/>
            <person name="Batalov S."/>
            <person name="Forrest A.R."/>
            <person name="Zavolan M."/>
            <person name="Davis M.J."/>
            <person name="Wilming L.G."/>
            <person name="Aidinis V."/>
            <person name="Allen J.E."/>
            <person name="Ambesi-Impiombato A."/>
            <person name="Apweiler R."/>
            <person name="Aturaliya R.N."/>
            <person name="Bailey T.L."/>
            <person name="Bansal M."/>
            <person name="Baxter L."/>
            <person name="Beisel K.W."/>
            <person name="Bersano T."/>
            <person name="Bono H."/>
            <person name="Chalk A.M."/>
            <person name="Chiu K.P."/>
            <person name="Choudhary V."/>
            <person name="Christoffels A."/>
            <person name="Clutterbuck D.R."/>
            <person name="Crowe M.L."/>
            <person name="Dalla E."/>
            <person name="Dalrymple B.P."/>
            <person name="de Bono B."/>
            <person name="Della Gatta G."/>
            <person name="di Bernardo D."/>
            <person name="Down T."/>
            <person name="Engstrom P."/>
            <person name="Fagiolini M."/>
            <person name="Faulkner G."/>
            <person name="Fletcher C.F."/>
            <person name="Fukushima T."/>
            <person name="Furuno M."/>
            <person name="Futaki S."/>
            <person name="Gariboldi M."/>
            <person name="Georgii-Hemming P."/>
            <person name="Gingeras T.R."/>
            <person name="Gojobori T."/>
            <person name="Green R.E."/>
            <person name="Gustincich S."/>
            <person name="Harbers M."/>
            <person name="Hayashi Y."/>
            <person name="Hensch T.K."/>
            <person name="Hirokawa N."/>
            <person name="Hill D."/>
            <person name="Huminiecki L."/>
            <person name="Iacono M."/>
            <person name="Ikeo K."/>
            <person name="Iwama A."/>
            <person name="Ishikawa T."/>
            <person name="Jakt M."/>
            <person name="Kanapin A."/>
            <person name="Katoh M."/>
            <person name="Kawasawa Y."/>
            <person name="Kelso J."/>
            <person name="Kitamura H."/>
            <person name="Kitano H."/>
            <person name="Kollias G."/>
            <person name="Krishnan S.P."/>
            <person name="Kruger A."/>
            <person name="Kummerfeld S.K."/>
            <person name="Kurochkin I.V."/>
            <person name="Lareau L.F."/>
            <person name="Lazarevic D."/>
            <person name="Lipovich L."/>
            <person name="Liu J."/>
            <person name="Liuni S."/>
            <person name="McWilliam S."/>
            <person name="Madan Babu M."/>
            <person name="Madera M."/>
            <person name="Marchionni L."/>
            <person name="Matsuda H."/>
            <person name="Matsuzawa S."/>
            <person name="Miki H."/>
            <person name="Mignone F."/>
            <person name="Miyake S."/>
            <person name="Morris K."/>
            <person name="Mottagui-Tabar S."/>
            <person name="Mulder N."/>
            <person name="Nakano N."/>
            <person name="Nakauchi H."/>
            <person name="Ng P."/>
            <person name="Nilsson R."/>
            <person name="Nishiguchi S."/>
            <person name="Nishikawa S."/>
            <person name="Nori F."/>
            <person name="Ohara O."/>
            <person name="Okazaki Y."/>
            <person name="Orlando V."/>
            <person name="Pang K.C."/>
            <person name="Pavan W.J."/>
            <person name="Pavesi G."/>
            <person name="Pesole G."/>
            <person name="Petrovsky N."/>
            <person name="Piazza S."/>
            <person name="Reed J."/>
            <person name="Reid J.F."/>
            <person name="Ring B.Z."/>
            <person name="Ringwald M."/>
            <person name="Rost B."/>
            <person name="Ruan Y."/>
            <person name="Salzberg S.L."/>
            <person name="Sandelin A."/>
            <person name="Schneider C."/>
            <person name="Schoenbach C."/>
            <person name="Sekiguchi K."/>
            <person name="Semple C.A."/>
            <person name="Seno S."/>
            <person name="Sessa L."/>
            <person name="Sheng Y."/>
            <person name="Shibata Y."/>
            <person name="Shimada H."/>
            <person name="Shimada K."/>
            <person name="Silva D."/>
            <person name="Sinclair B."/>
            <person name="Sperling S."/>
            <person name="Stupka E."/>
            <person name="Sugiura K."/>
            <person name="Sultana R."/>
            <person name="Takenaka Y."/>
            <person name="Taki K."/>
            <person name="Tammoja K."/>
            <person name="Tan S.L."/>
            <person name="Tang S."/>
            <person name="Taylor M.S."/>
            <person name="Tegner J."/>
            <person name="Teichmann S.A."/>
            <person name="Ueda H.R."/>
            <person name="van Nimwegen E."/>
            <person name="Verardo R."/>
            <person name="Wei C.L."/>
            <person name="Yagi K."/>
            <person name="Yamanishi H."/>
            <person name="Zabarovsky E."/>
            <person name="Zhu S."/>
            <person name="Zimmer A."/>
            <person name="Hide W."/>
            <person name="Bult C."/>
            <person name="Grimmond S.M."/>
            <person name="Teasdale R.D."/>
            <person name="Liu E.T."/>
            <person name="Brusic V."/>
            <person name="Quackenbush J."/>
            <person name="Wahlestedt C."/>
            <person name="Mattick J.S."/>
            <person name="Hume D.A."/>
            <person name="Kai C."/>
            <person name="Sasaki D."/>
            <person name="Tomaru Y."/>
            <person name="Fukuda S."/>
            <person name="Kanamori-Katayama M."/>
            <person name="Suzuki M."/>
            <person name="Aoki J."/>
            <person name="Arakawa T."/>
            <person name="Iida J."/>
            <person name="Imamura K."/>
            <person name="Itoh M."/>
            <person name="Kato T."/>
            <person name="Kawaji H."/>
            <person name="Kawagashira N."/>
            <person name="Kawashima T."/>
            <person name="Kojima M."/>
            <person name="Kondo S."/>
            <person name="Konno H."/>
            <person name="Nakano K."/>
            <person name="Ninomiya N."/>
            <person name="Nishio T."/>
            <person name="Okada M."/>
            <person name="Plessy C."/>
            <person name="Shibata K."/>
            <person name="Shiraki T."/>
            <person name="Suzuki S."/>
            <person name="Tagami M."/>
            <person name="Waki K."/>
            <person name="Watahiki A."/>
            <person name="Okamura-Oho Y."/>
            <person name="Suzuki H."/>
            <person name="Kawai J."/>
            <person name="Hayashizaki Y."/>
        </authorList>
    </citation>
    <scope>NUCLEOTIDE SEQUENCE [LARGE SCALE MRNA] (ISOFORMS 1; 2 AND 3)</scope>
    <source>
        <strain>C57BL/6J</strain>
        <tissue>Cerebellum</tissue>
        <tissue>Testis</tissue>
    </source>
</reference>
<reference key="2">
    <citation type="journal article" date="2009" name="PLoS Biol.">
        <title>Lineage-specific biology revealed by a finished genome assembly of the mouse.</title>
        <authorList>
            <person name="Church D.M."/>
            <person name="Goodstadt L."/>
            <person name="Hillier L.W."/>
            <person name="Zody M.C."/>
            <person name="Goldstein S."/>
            <person name="She X."/>
            <person name="Bult C.J."/>
            <person name="Agarwala R."/>
            <person name="Cherry J.L."/>
            <person name="DiCuccio M."/>
            <person name="Hlavina W."/>
            <person name="Kapustin Y."/>
            <person name="Meric P."/>
            <person name="Maglott D."/>
            <person name="Birtle Z."/>
            <person name="Marques A.C."/>
            <person name="Graves T."/>
            <person name="Zhou S."/>
            <person name="Teague B."/>
            <person name="Potamousis K."/>
            <person name="Churas C."/>
            <person name="Place M."/>
            <person name="Herschleb J."/>
            <person name="Runnheim R."/>
            <person name="Forrest D."/>
            <person name="Amos-Landgraf J."/>
            <person name="Schwartz D.C."/>
            <person name="Cheng Z."/>
            <person name="Lindblad-Toh K."/>
            <person name="Eichler E.E."/>
            <person name="Ponting C.P."/>
        </authorList>
    </citation>
    <scope>NUCLEOTIDE SEQUENCE [LARGE SCALE GENOMIC DNA]</scope>
    <source>
        <strain>C57BL/6J</strain>
    </source>
</reference>
<reference key="3">
    <citation type="journal article" date="2004" name="Genome Res.">
        <title>The status, quality, and expansion of the NIH full-length cDNA project: the Mammalian Gene Collection (MGC).</title>
        <authorList>
            <consortium name="The MGC Project Team"/>
        </authorList>
    </citation>
    <scope>NUCLEOTIDE SEQUENCE [LARGE SCALE MRNA] (ISOFORM 1)</scope>
</reference>
<reference key="4">
    <citation type="journal article" date="2010" name="Cell">
        <title>A tissue-specific atlas of mouse protein phosphorylation and expression.</title>
        <authorList>
            <person name="Huttlin E.L."/>
            <person name="Jedrychowski M.P."/>
            <person name="Elias J.E."/>
            <person name="Goswami T."/>
            <person name="Rad R."/>
            <person name="Beausoleil S.A."/>
            <person name="Villen J."/>
            <person name="Haas W."/>
            <person name="Sowa M.E."/>
            <person name="Gygi S.P."/>
        </authorList>
    </citation>
    <scope>IDENTIFICATION BY MASS SPECTROMETRY [LARGE SCALE ANALYSIS]</scope>
    <source>
        <tissue>Testis</tissue>
    </source>
</reference>
<protein>
    <recommendedName>
        <fullName>Coiled-coil domain-containing protein 30</fullName>
    </recommendedName>
    <alternativeName>
        <fullName>Prefoldin subunit 6-like protein</fullName>
    </alternativeName>
</protein>
<feature type="chain" id="PRO_0000336046" description="Coiled-coil domain-containing protein 30">
    <location>
        <begin position="1"/>
        <end position="654"/>
    </location>
</feature>
<feature type="region of interest" description="Disordered" evidence="2">
    <location>
        <begin position="38"/>
        <end position="65"/>
    </location>
</feature>
<feature type="region of interest" description="Disordered" evidence="2">
    <location>
        <begin position="614"/>
        <end position="654"/>
    </location>
</feature>
<feature type="coiled-coil region" evidence="1">
    <location>
        <begin position="97"/>
        <end position="244"/>
    </location>
</feature>
<feature type="coiled-coil region" evidence="1">
    <location>
        <begin position="276"/>
        <end position="559"/>
    </location>
</feature>
<feature type="compositionally biased region" description="Basic and acidic residues" evidence="2">
    <location>
        <begin position="53"/>
        <end position="62"/>
    </location>
</feature>
<feature type="compositionally biased region" description="Polar residues" evidence="2">
    <location>
        <begin position="625"/>
        <end position="654"/>
    </location>
</feature>
<feature type="splice variant" id="VSP_033798" description="In isoform 3." evidence="3">
    <location>
        <begin position="1"/>
        <end position="67"/>
    </location>
</feature>
<feature type="splice variant" id="VSP_033799" description="In isoform 3." evidence="3">
    <original>QDCLLRDVECIAQKLEASLEEIHRGAREPREEREQRTLGDALENARLEIEKLKDNLMKLKESGTTDLQRAREHNQRLDEEILALRNRVRSLDSEKKVLGEM</original>
    <variation>MTSENACEDLVSKGPLLEVEAVSPSEDRQALCSELGESKQEETPDESVKAATFPRERQESQQMRGHEQPLAVEPKEVGRLEEEASLQSQSCGGSSDDSSTK</variation>
    <location>
        <begin position="68"/>
        <end position="168"/>
    </location>
</feature>
<feature type="splice variant" id="VSP_033800" description="In isoform 2." evidence="3">
    <location>
        <begin position="164"/>
        <end position="168"/>
    </location>
</feature>
<feature type="splice variant" id="VSP_033801" description="In isoform 3." evidence="3">
    <original>ILLDQDINELQTQVRALQDKEEQQEA</original>
    <variation>GLGFAPQHCTNTAIFPGPPLFLSESC</variation>
    <location>
        <begin position="351"/>
        <end position="376"/>
    </location>
</feature>
<feature type="splice variant" id="VSP_033802" description="In isoform 3." evidence="3">
    <location>
        <begin position="377"/>
        <end position="654"/>
    </location>
</feature>
<feature type="sequence conflict" description="In Ref. 3; AAI14437." evidence="4" ref="3">
    <original>A</original>
    <variation>V</variation>
    <location>
        <position position="66"/>
    </location>
</feature>
<feature type="sequence conflict" description="In Ref. 3; AAI14437." evidence="4" ref="3">
    <original>N</original>
    <variation>S</variation>
    <location>
        <position position="412"/>
    </location>
</feature>
<accession>Q8BVF4</accession>
<accession>Q14CD0</accession>
<accession>Q3TR07</accession>
<accession>Q9D9N6</accession>
<evidence type="ECO:0000255" key="1"/>
<evidence type="ECO:0000256" key="2">
    <source>
        <dbReference type="SAM" id="MobiDB-lite"/>
    </source>
</evidence>
<evidence type="ECO:0000303" key="3">
    <source>
    </source>
</evidence>
<evidence type="ECO:0000305" key="4"/>
<gene>
    <name type="primary">Ccdc30</name>
    <name type="synonym">Pfdn6l</name>
</gene>
<name>CCD30_MOUSE</name>
<dbReference type="EMBL" id="AK006668">
    <property type="protein sequence ID" value="BAB24696.1"/>
    <property type="molecule type" value="mRNA"/>
</dbReference>
<dbReference type="EMBL" id="AK078362">
    <property type="protein sequence ID" value="BAC37237.1"/>
    <property type="molecule type" value="mRNA"/>
</dbReference>
<dbReference type="EMBL" id="AK163185">
    <property type="protein sequence ID" value="BAE37224.1"/>
    <property type="molecule type" value="mRNA"/>
</dbReference>
<dbReference type="EMBL" id="BX470216">
    <property type="status" value="NOT_ANNOTATED_CDS"/>
    <property type="molecule type" value="Genomic_DNA"/>
</dbReference>
<dbReference type="EMBL" id="BC114436">
    <property type="protein sequence ID" value="AAI14437.1"/>
    <property type="molecule type" value="mRNA"/>
</dbReference>
<dbReference type="CCDS" id="CCDS38861.1">
    <molecule id="Q8BVF4-1"/>
</dbReference>
<dbReference type="CCDS" id="CCDS89822.1">
    <molecule id="Q8BVF4-2"/>
</dbReference>
<dbReference type="RefSeq" id="NP_001257364.1">
    <molecule id="Q8BVF4-2"/>
    <property type="nucleotide sequence ID" value="NM_001270435.2"/>
</dbReference>
<dbReference type="RefSeq" id="NP_083562.1">
    <molecule id="Q8BVF4-1"/>
    <property type="nucleotide sequence ID" value="NM_029286.3"/>
</dbReference>
<dbReference type="SMR" id="Q8BVF4"/>
<dbReference type="FunCoup" id="Q8BVF4">
    <property type="interactions" value="28"/>
</dbReference>
<dbReference type="STRING" id="10090.ENSMUSP00000158825"/>
<dbReference type="iPTMnet" id="Q8BVF4"/>
<dbReference type="PhosphoSitePlus" id="Q8BVF4"/>
<dbReference type="PaxDb" id="10090-ENSMUSP00000070621"/>
<dbReference type="ProteomicsDB" id="281305">
    <molecule id="Q8BVF4-1"/>
</dbReference>
<dbReference type="ProteomicsDB" id="281306">
    <molecule id="Q8BVF4-2"/>
</dbReference>
<dbReference type="ProteomicsDB" id="281307">
    <molecule id="Q8BVF4-3"/>
</dbReference>
<dbReference type="Antibodypedia" id="52243">
    <property type="antibodies" value="62 antibodies from 10 providers"/>
</dbReference>
<dbReference type="Ensembl" id="ENSMUST00000044781.9">
    <molecule id="Q8BVF4-3"/>
    <property type="protein sequence ID" value="ENSMUSP00000047534.3"/>
    <property type="gene ID" value="ENSMUSG00000028637.17"/>
</dbReference>
<dbReference type="Ensembl" id="ENSMUST00000238293.2">
    <molecule id="Q8BVF4-2"/>
    <property type="protein sequence ID" value="ENSMUSP00000158680.2"/>
    <property type="gene ID" value="ENSMUSG00000028637.17"/>
</dbReference>
<dbReference type="Ensembl" id="ENSMUST00000238759.2">
    <molecule id="Q8BVF4-1"/>
    <property type="protein sequence ID" value="ENSMUSP00000158825.2"/>
    <property type="gene ID" value="ENSMUSG00000028637.17"/>
</dbReference>
<dbReference type="GeneID" id="73332"/>
<dbReference type="KEGG" id="mmu:73332"/>
<dbReference type="UCSC" id="uc008umc.2">
    <molecule id="Q8BVF4-1"/>
    <property type="organism name" value="mouse"/>
</dbReference>
<dbReference type="UCSC" id="uc008umd.2">
    <molecule id="Q8BVF4-2"/>
    <property type="organism name" value="mouse"/>
</dbReference>
<dbReference type="UCSC" id="uc008ume.1">
    <molecule id="Q8BVF4-3"/>
    <property type="organism name" value="mouse"/>
</dbReference>
<dbReference type="AGR" id="MGI:1920582"/>
<dbReference type="CTD" id="728621"/>
<dbReference type="MGI" id="MGI:1920582">
    <property type="gene designation" value="Ccdc30"/>
</dbReference>
<dbReference type="VEuPathDB" id="HostDB:ENSMUSG00000028637"/>
<dbReference type="eggNOG" id="ENOG502QWNQ">
    <property type="taxonomic scope" value="Eukaryota"/>
</dbReference>
<dbReference type="GeneTree" id="ENSGT00390000007816"/>
<dbReference type="HOGENOM" id="CLU_035106_0_0_1"/>
<dbReference type="InParanoid" id="Q8BVF4"/>
<dbReference type="OMA" id="EREQHEC"/>
<dbReference type="PhylomeDB" id="Q8BVF4"/>
<dbReference type="TreeFam" id="TF333239"/>
<dbReference type="BioGRID-ORCS" id="73332">
    <property type="hits" value="1 hit in 73 CRISPR screens"/>
</dbReference>
<dbReference type="ChiTaRS" id="Ccdc30">
    <property type="organism name" value="mouse"/>
</dbReference>
<dbReference type="PRO" id="PR:Q8BVF4"/>
<dbReference type="Proteomes" id="UP000000589">
    <property type="component" value="Chromosome 4"/>
</dbReference>
<dbReference type="RNAct" id="Q8BVF4">
    <property type="molecule type" value="protein"/>
</dbReference>
<dbReference type="Bgee" id="ENSMUSG00000028637">
    <property type="expression patterns" value="Expressed in spermatid and 176 other cell types or tissues"/>
</dbReference>
<dbReference type="ExpressionAtlas" id="Q8BVF4">
    <property type="expression patterns" value="baseline and differential"/>
</dbReference>
<dbReference type="InterPro" id="IPR052825">
    <property type="entry name" value="CCD-Prefoldin_beta-like"/>
</dbReference>
<dbReference type="InterPro" id="IPR031476">
    <property type="entry name" value="DUF4686"/>
</dbReference>
<dbReference type="PANTHER" id="PTHR34479">
    <property type="entry name" value="COILED-COIL DOMAIN-CONTAINING PROTEIN 30"/>
    <property type="match status" value="1"/>
</dbReference>
<dbReference type="PANTHER" id="PTHR34479:SF1">
    <property type="entry name" value="COILED-COIL DOMAIN-CONTAINING PROTEIN 30"/>
    <property type="match status" value="1"/>
</dbReference>
<dbReference type="Pfam" id="PF15742">
    <property type="entry name" value="DUF4686"/>
    <property type="match status" value="1"/>
</dbReference>
<keyword id="KW-0025">Alternative splicing</keyword>
<keyword id="KW-0175">Coiled coil</keyword>
<keyword id="KW-1185">Reference proteome</keyword>
<proteinExistence type="evidence at protein level"/>
<comment type="alternative products">
    <event type="alternative splicing"/>
    <isoform>
        <id>Q8BVF4-1</id>
        <name>1</name>
        <sequence type="displayed"/>
    </isoform>
    <isoform>
        <id>Q8BVF4-2</id>
        <name>2</name>
        <sequence type="described" ref="VSP_033800"/>
    </isoform>
    <isoform>
        <id>Q8BVF4-3</id>
        <name>3</name>
        <sequence type="described" ref="VSP_033798 VSP_033799 VSP_033801 VSP_033802"/>
    </isoform>
</comment>
<comment type="similarity">
    <text evidence="4">Belongs to the prefoldin subunit beta family.</text>
</comment>